<gene>
    <name type="ordered locus">SaurJH1_0631</name>
</gene>
<reference key="1">
    <citation type="submission" date="2007-06" db="EMBL/GenBank/DDBJ databases">
        <title>Complete sequence of chromosome of Staphylococcus aureus subsp. aureus JH1.</title>
        <authorList>
            <consortium name="US DOE Joint Genome Institute"/>
            <person name="Copeland A."/>
            <person name="Lucas S."/>
            <person name="Lapidus A."/>
            <person name="Barry K."/>
            <person name="Detter J.C."/>
            <person name="Glavina del Rio T."/>
            <person name="Hammon N."/>
            <person name="Israni S."/>
            <person name="Dalin E."/>
            <person name="Tice H."/>
            <person name="Pitluck S."/>
            <person name="Chain P."/>
            <person name="Malfatti S."/>
            <person name="Shin M."/>
            <person name="Vergez L."/>
            <person name="Schmutz J."/>
            <person name="Larimer F."/>
            <person name="Land M."/>
            <person name="Hauser L."/>
            <person name="Kyrpides N."/>
            <person name="Ivanova N."/>
            <person name="Tomasz A."/>
            <person name="Richardson P."/>
        </authorList>
    </citation>
    <scope>NUCLEOTIDE SEQUENCE [LARGE SCALE GENOMIC DNA]</scope>
    <source>
        <strain>JH1</strain>
    </source>
</reference>
<keyword id="KW-0175">Coiled coil</keyword>
<organism>
    <name type="scientific">Staphylococcus aureus (strain JH1)</name>
    <dbReference type="NCBI Taxonomy" id="359787"/>
    <lineage>
        <taxon>Bacteria</taxon>
        <taxon>Bacillati</taxon>
        <taxon>Bacillota</taxon>
        <taxon>Bacilli</taxon>
        <taxon>Bacillales</taxon>
        <taxon>Staphylococcaceae</taxon>
        <taxon>Staphylococcus</taxon>
    </lineage>
</organism>
<comment type="similarity">
    <text evidence="1">Belongs to the UPF0741 family.</text>
</comment>
<accession>A6TZ71</accession>
<name>Y631_STAA2</name>
<feature type="chain" id="PRO_0000372747" description="UPF0741 protein SaurJH1_0631">
    <location>
        <begin position="1"/>
        <end position="113"/>
    </location>
</feature>
<feature type="region of interest" description="Disordered" evidence="2">
    <location>
        <begin position="68"/>
        <end position="113"/>
    </location>
</feature>
<feature type="coiled-coil region" evidence="1">
    <location>
        <begin position="78"/>
        <end position="113"/>
    </location>
</feature>
<feature type="compositionally biased region" description="Basic residues" evidence="2">
    <location>
        <begin position="85"/>
        <end position="94"/>
    </location>
</feature>
<feature type="compositionally biased region" description="Basic and acidic residues" evidence="2">
    <location>
        <begin position="95"/>
        <end position="113"/>
    </location>
</feature>
<evidence type="ECO:0000255" key="1">
    <source>
        <dbReference type="HAMAP-Rule" id="MF_01863"/>
    </source>
</evidence>
<evidence type="ECO:0000256" key="2">
    <source>
        <dbReference type="SAM" id="MobiDB-lite"/>
    </source>
</evidence>
<proteinExistence type="inferred from homology"/>
<protein>
    <recommendedName>
        <fullName evidence="1">UPF0741 protein SaurJH1_0631</fullName>
    </recommendedName>
</protein>
<dbReference type="EMBL" id="CP000736">
    <property type="protein sequence ID" value="ABR51489.1"/>
    <property type="molecule type" value="Genomic_DNA"/>
</dbReference>
<dbReference type="SMR" id="A6TZ71"/>
<dbReference type="KEGG" id="sah:SaurJH1_0631"/>
<dbReference type="HOGENOM" id="CLU_2156795_0_0_9"/>
<dbReference type="HAMAP" id="MF_01863">
    <property type="entry name" value="UPF0741"/>
    <property type="match status" value="1"/>
</dbReference>
<dbReference type="InterPro" id="IPR009910">
    <property type="entry name" value="DUF1450"/>
</dbReference>
<dbReference type="InterPro" id="IPR020880">
    <property type="entry name" value="UPF0741"/>
</dbReference>
<dbReference type="Pfam" id="PF07293">
    <property type="entry name" value="DUF1450"/>
    <property type="match status" value="1"/>
</dbReference>
<sequence length="113" mass="13536">MKNTFLICDECQAVNIRTLQKKLEKLDPDAEIVIGCQSYCGPGRRKTFTFVNNRPLAALTEEELIEKVSQQLKKPRDPEEEERLRKRHEERKRRKEEQDRKLKEKLEKRKAQQ</sequence>